<comment type="function">
    <text evidence="1">Catalyzes the condensation of iminoaspartate with dihydroxyacetone phosphate to form quinolinate.</text>
</comment>
<comment type="catalytic activity">
    <reaction evidence="1">
        <text>iminosuccinate + dihydroxyacetone phosphate = quinolinate + phosphate + 2 H2O + H(+)</text>
        <dbReference type="Rhea" id="RHEA:25888"/>
        <dbReference type="ChEBI" id="CHEBI:15377"/>
        <dbReference type="ChEBI" id="CHEBI:15378"/>
        <dbReference type="ChEBI" id="CHEBI:29959"/>
        <dbReference type="ChEBI" id="CHEBI:43474"/>
        <dbReference type="ChEBI" id="CHEBI:57642"/>
        <dbReference type="ChEBI" id="CHEBI:77875"/>
        <dbReference type="EC" id="2.5.1.72"/>
    </reaction>
    <physiologicalReaction direction="left-to-right" evidence="1">
        <dbReference type="Rhea" id="RHEA:25889"/>
    </physiologicalReaction>
</comment>
<comment type="cofactor">
    <cofactor evidence="1">
        <name>[4Fe-4S] cluster</name>
        <dbReference type="ChEBI" id="CHEBI:49883"/>
    </cofactor>
    <text evidence="1">Binds 1 [4Fe-4S] cluster per subunit.</text>
</comment>
<comment type="pathway">
    <text evidence="1">Cofactor biosynthesis; NAD(+) biosynthesis; quinolinate from iminoaspartate: step 1/1.</text>
</comment>
<comment type="subcellular location">
    <subcellularLocation>
        <location evidence="1">Cytoplasm</location>
    </subcellularLocation>
</comment>
<comment type="similarity">
    <text evidence="1">Belongs to the quinolinate synthase family. Type 2 subfamily.</text>
</comment>
<feature type="chain" id="PRO_1000061152" description="Quinolinate synthase">
    <location>
        <begin position="1"/>
        <end position="301"/>
    </location>
</feature>
<feature type="binding site" evidence="1">
    <location>
        <position position="21"/>
    </location>
    <ligand>
        <name>iminosuccinate</name>
        <dbReference type="ChEBI" id="CHEBI:77875"/>
    </ligand>
</feature>
<feature type="binding site" evidence="1">
    <location>
        <position position="38"/>
    </location>
    <ligand>
        <name>iminosuccinate</name>
        <dbReference type="ChEBI" id="CHEBI:77875"/>
    </ligand>
</feature>
<feature type="binding site" evidence="1">
    <location>
        <position position="83"/>
    </location>
    <ligand>
        <name>[4Fe-4S] cluster</name>
        <dbReference type="ChEBI" id="CHEBI:49883"/>
    </ligand>
</feature>
<feature type="binding site" evidence="1">
    <location>
        <begin position="109"/>
        <end position="111"/>
    </location>
    <ligand>
        <name>iminosuccinate</name>
        <dbReference type="ChEBI" id="CHEBI:77875"/>
    </ligand>
</feature>
<feature type="binding site" evidence="1">
    <location>
        <position position="126"/>
    </location>
    <ligand>
        <name>iminosuccinate</name>
        <dbReference type="ChEBI" id="CHEBI:77875"/>
    </ligand>
</feature>
<feature type="binding site" evidence="1">
    <location>
        <position position="169"/>
    </location>
    <ligand>
        <name>[4Fe-4S] cluster</name>
        <dbReference type="ChEBI" id="CHEBI:49883"/>
    </ligand>
</feature>
<feature type="binding site" evidence="1">
    <location>
        <begin position="195"/>
        <end position="197"/>
    </location>
    <ligand>
        <name>iminosuccinate</name>
        <dbReference type="ChEBI" id="CHEBI:77875"/>
    </ligand>
</feature>
<feature type="binding site" evidence="1">
    <location>
        <position position="212"/>
    </location>
    <ligand>
        <name>iminosuccinate</name>
        <dbReference type="ChEBI" id="CHEBI:77875"/>
    </ligand>
</feature>
<feature type="binding site" evidence="1">
    <location>
        <position position="257"/>
    </location>
    <ligand>
        <name>[4Fe-4S] cluster</name>
        <dbReference type="ChEBI" id="CHEBI:49883"/>
    </ligand>
</feature>
<organism>
    <name type="scientific">Clostridium perfringens (strain ATCC 13124 / DSM 756 / JCM 1290 / NCIMB 6125 / NCTC 8237 / Type A)</name>
    <dbReference type="NCBI Taxonomy" id="195103"/>
    <lineage>
        <taxon>Bacteria</taxon>
        <taxon>Bacillati</taxon>
        <taxon>Bacillota</taxon>
        <taxon>Clostridia</taxon>
        <taxon>Eubacteriales</taxon>
        <taxon>Clostridiaceae</taxon>
        <taxon>Clostridium</taxon>
    </lineage>
</organism>
<dbReference type="EC" id="2.5.1.72" evidence="1"/>
<dbReference type="EMBL" id="CP000246">
    <property type="protein sequence ID" value="ABG84870.1"/>
    <property type="molecule type" value="Genomic_DNA"/>
</dbReference>
<dbReference type="RefSeq" id="WP_004457430.1">
    <property type="nucleotide sequence ID" value="NC_008261.1"/>
</dbReference>
<dbReference type="SMR" id="Q0TU51"/>
<dbReference type="STRING" id="195103.CPF_0382"/>
<dbReference type="PaxDb" id="195103-CPF_0382"/>
<dbReference type="GeneID" id="93003272"/>
<dbReference type="KEGG" id="cpf:CPF_0382"/>
<dbReference type="eggNOG" id="COG0379">
    <property type="taxonomic scope" value="Bacteria"/>
</dbReference>
<dbReference type="HOGENOM" id="CLU_047382_0_0_9"/>
<dbReference type="UniPathway" id="UPA00253">
    <property type="reaction ID" value="UER00327"/>
</dbReference>
<dbReference type="Proteomes" id="UP000001823">
    <property type="component" value="Chromosome"/>
</dbReference>
<dbReference type="GO" id="GO:0005829">
    <property type="term" value="C:cytosol"/>
    <property type="evidence" value="ECO:0007669"/>
    <property type="project" value="TreeGrafter"/>
</dbReference>
<dbReference type="GO" id="GO:0051539">
    <property type="term" value="F:4 iron, 4 sulfur cluster binding"/>
    <property type="evidence" value="ECO:0007669"/>
    <property type="project" value="UniProtKB-KW"/>
</dbReference>
<dbReference type="GO" id="GO:0046872">
    <property type="term" value="F:metal ion binding"/>
    <property type="evidence" value="ECO:0007669"/>
    <property type="project" value="UniProtKB-KW"/>
</dbReference>
<dbReference type="GO" id="GO:0008987">
    <property type="term" value="F:quinolinate synthetase A activity"/>
    <property type="evidence" value="ECO:0007669"/>
    <property type="project" value="UniProtKB-UniRule"/>
</dbReference>
<dbReference type="GO" id="GO:0034628">
    <property type="term" value="P:'de novo' NAD biosynthetic process from L-aspartate"/>
    <property type="evidence" value="ECO:0007669"/>
    <property type="project" value="TreeGrafter"/>
</dbReference>
<dbReference type="FunFam" id="3.40.50.10800:FF:000003">
    <property type="entry name" value="Quinolinate synthase A"/>
    <property type="match status" value="1"/>
</dbReference>
<dbReference type="Gene3D" id="3.40.50.10800">
    <property type="entry name" value="NadA-like"/>
    <property type="match status" value="3"/>
</dbReference>
<dbReference type="HAMAP" id="MF_00568">
    <property type="entry name" value="NadA_type2"/>
    <property type="match status" value="1"/>
</dbReference>
<dbReference type="InterPro" id="IPR003473">
    <property type="entry name" value="NadA"/>
</dbReference>
<dbReference type="InterPro" id="IPR036094">
    <property type="entry name" value="NadA_sf"/>
</dbReference>
<dbReference type="InterPro" id="IPR023066">
    <property type="entry name" value="Quinolinate_synth_type2"/>
</dbReference>
<dbReference type="NCBIfam" id="TIGR00550">
    <property type="entry name" value="nadA"/>
    <property type="match status" value="1"/>
</dbReference>
<dbReference type="NCBIfam" id="NF006878">
    <property type="entry name" value="PRK09375.1-2"/>
    <property type="match status" value="1"/>
</dbReference>
<dbReference type="PANTHER" id="PTHR30573:SF0">
    <property type="entry name" value="QUINOLINATE SYNTHASE, CHLOROPLASTIC"/>
    <property type="match status" value="1"/>
</dbReference>
<dbReference type="PANTHER" id="PTHR30573">
    <property type="entry name" value="QUINOLINATE SYNTHETASE A"/>
    <property type="match status" value="1"/>
</dbReference>
<dbReference type="Pfam" id="PF02445">
    <property type="entry name" value="NadA"/>
    <property type="match status" value="1"/>
</dbReference>
<dbReference type="SUPFAM" id="SSF142754">
    <property type="entry name" value="NadA-like"/>
    <property type="match status" value="1"/>
</dbReference>
<gene>
    <name evidence="1" type="primary">nadA</name>
    <name type="ordered locus">CPF_0382</name>
</gene>
<protein>
    <recommendedName>
        <fullName evidence="1">Quinolinate synthase</fullName>
        <ecNumber evidence="1">2.5.1.72</ecNumber>
    </recommendedName>
</protein>
<accession>Q0TU51</accession>
<proteinExistence type="inferred from homology"/>
<sequence length="301" mass="34255">MDIRNEILKLKKEKGAIILAHYYQIPEIQEIADYVGDSYYLSKIAKDCEENIIVFCGVKFMAESAKILSPEKTVILPVMEAGCVMADMATADGLAKLKEEHPNAKVVCYINSSTEVKALSDVCCTSSNAENIINNLEEKEIIFLPDRNLGSYIQEKTPDKKFILWNGFCIVHEAIQKEEILRLKSEHEGILTVAHPECSKEIRDISDFIGSTSEIINFVNNSSNKKFIIITEEGVLHQLRKNGEEKEFYIPYGKMVCRNMKMTTLKDLYESLLKMENKIEIDEDLRLKAYNSLKNMHKLGG</sequence>
<name>NADA_CLOP1</name>
<reference key="1">
    <citation type="journal article" date="2006" name="Genome Res.">
        <title>Skewed genomic variability in strains of the toxigenic bacterial pathogen, Clostridium perfringens.</title>
        <authorList>
            <person name="Myers G.S.A."/>
            <person name="Rasko D.A."/>
            <person name="Cheung J.K."/>
            <person name="Ravel J."/>
            <person name="Seshadri R."/>
            <person name="DeBoy R.T."/>
            <person name="Ren Q."/>
            <person name="Varga J."/>
            <person name="Awad M.M."/>
            <person name="Brinkac L.M."/>
            <person name="Daugherty S.C."/>
            <person name="Haft D.H."/>
            <person name="Dodson R.J."/>
            <person name="Madupu R."/>
            <person name="Nelson W.C."/>
            <person name="Rosovitz M.J."/>
            <person name="Sullivan S.A."/>
            <person name="Khouri H."/>
            <person name="Dimitrov G.I."/>
            <person name="Watkins K.L."/>
            <person name="Mulligan S."/>
            <person name="Benton J."/>
            <person name="Radune D."/>
            <person name="Fisher D.J."/>
            <person name="Atkins H.S."/>
            <person name="Hiscox T."/>
            <person name="Jost B.H."/>
            <person name="Billington S.J."/>
            <person name="Songer J.G."/>
            <person name="McClane B.A."/>
            <person name="Titball R.W."/>
            <person name="Rood J.I."/>
            <person name="Melville S.B."/>
            <person name="Paulsen I.T."/>
        </authorList>
    </citation>
    <scope>NUCLEOTIDE SEQUENCE [LARGE SCALE GENOMIC DNA]</scope>
    <source>
        <strain>ATCC 13124 / DSM 756 / JCM 1290 / NCIMB 6125 / NCTC 8237 / S 107 / Type A</strain>
    </source>
</reference>
<evidence type="ECO:0000255" key="1">
    <source>
        <dbReference type="HAMAP-Rule" id="MF_00568"/>
    </source>
</evidence>
<keyword id="KW-0004">4Fe-4S</keyword>
<keyword id="KW-0963">Cytoplasm</keyword>
<keyword id="KW-0408">Iron</keyword>
<keyword id="KW-0411">Iron-sulfur</keyword>
<keyword id="KW-0479">Metal-binding</keyword>
<keyword id="KW-0662">Pyridine nucleotide biosynthesis</keyword>
<keyword id="KW-0808">Transferase</keyword>